<name>BIOB_ALISL</name>
<keyword id="KW-0001">2Fe-2S</keyword>
<keyword id="KW-0004">4Fe-4S</keyword>
<keyword id="KW-0093">Biotin biosynthesis</keyword>
<keyword id="KW-0408">Iron</keyword>
<keyword id="KW-0411">Iron-sulfur</keyword>
<keyword id="KW-0479">Metal-binding</keyword>
<keyword id="KW-0949">S-adenosyl-L-methionine</keyword>
<keyword id="KW-0808">Transferase</keyword>
<gene>
    <name evidence="1" type="primary">bioB</name>
    <name type="ordered locus">VSAL_II0860</name>
</gene>
<reference key="1">
    <citation type="journal article" date="2008" name="BMC Genomics">
        <title>The genome sequence of the fish pathogen Aliivibrio salmonicida strain LFI1238 shows extensive evidence of gene decay.</title>
        <authorList>
            <person name="Hjerde E."/>
            <person name="Lorentzen M.S."/>
            <person name="Holden M.T."/>
            <person name="Seeger K."/>
            <person name="Paulsen S."/>
            <person name="Bason N."/>
            <person name="Churcher C."/>
            <person name="Harris D."/>
            <person name="Norbertczak H."/>
            <person name="Quail M.A."/>
            <person name="Sanders S."/>
            <person name="Thurston S."/>
            <person name="Parkhill J."/>
            <person name="Willassen N.P."/>
            <person name="Thomson N.R."/>
        </authorList>
    </citation>
    <scope>NUCLEOTIDE SEQUENCE [LARGE SCALE GENOMIC DNA]</scope>
    <source>
        <strain>LFI1238</strain>
    </source>
</reference>
<accession>B6ESC7</accession>
<sequence length="350" mass="39194">MEVRHNWTVVEVKALMDKPFMDLVFEAQLVHRQYQEANYVQVSTLLSIKTGACPEDCKYCPQSAHYRTDVDRERLMEVESVLDAAKKAKDSGSTRFCMGAAWKNPKERDMPYLLDMIKGVKDIGLETCMTLGMITSDQAGELSGAGLDYYNHNLDTSPEFYGNIITTRTYQDRLDTLSHVRDAGMKICSGGIIGMGESVNDRAGLFVELANLPQHPESVPVNMLVKVKGTPLEDAEDVDPFDFIRLIAVARIMMPESAVRLSAGRESMNEQMQALCFMAGTNSVFYGCKLLTTPNPDEDSDMQLFKKLGVNSHQVAQKPDEVQEHELLDRVAERVASRPDKNDLFYEASV</sequence>
<protein>
    <recommendedName>
        <fullName evidence="1">Biotin synthase</fullName>
        <ecNumber evidence="1">2.8.1.6</ecNumber>
    </recommendedName>
</protein>
<evidence type="ECO:0000255" key="1">
    <source>
        <dbReference type="HAMAP-Rule" id="MF_01694"/>
    </source>
</evidence>
<evidence type="ECO:0000255" key="2">
    <source>
        <dbReference type="PROSITE-ProRule" id="PRU01266"/>
    </source>
</evidence>
<dbReference type="EC" id="2.8.1.6" evidence="1"/>
<dbReference type="EMBL" id="FM178380">
    <property type="protein sequence ID" value="CAQ81614.1"/>
    <property type="molecule type" value="Genomic_DNA"/>
</dbReference>
<dbReference type="RefSeq" id="WP_012552134.1">
    <property type="nucleotide sequence ID" value="NC_011313.1"/>
</dbReference>
<dbReference type="SMR" id="B6ESC7"/>
<dbReference type="KEGG" id="vsa:VSAL_II0860"/>
<dbReference type="eggNOG" id="COG0502">
    <property type="taxonomic scope" value="Bacteria"/>
</dbReference>
<dbReference type="HOGENOM" id="CLU_033172_1_2_6"/>
<dbReference type="UniPathway" id="UPA00078">
    <property type="reaction ID" value="UER00162"/>
</dbReference>
<dbReference type="Proteomes" id="UP000001730">
    <property type="component" value="Chromosome 2"/>
</dbReference>
<dbReference type="GO" id="GO:0051537">
    <property type="term" value="F:2 iron, 2 sulfur cluster binding"/>
    <property type="evidence" value="ECO:0007669"/>
    <property type="project" value="UniProtKB-KW"/>
</dbReference>
<dbReference type="GO" id="GO:0051539">
    <property type="term" value="F:4 iron, 4 sulfur cluster binding"/>
    <property type="evidence" value="ECO:0007669"/>
    <property type="project" value="UniProtKB-KW"/>
</dbReference>
<dbReference type="GO" id="GO:0004076">
    <property type="term" value="F:biotin synthase activity"/>
    <property type="evidence" value="ECO:0007669"/>
    <property type="project" value="UniProtKB-UniRule"/>
</dbReference>
<dbReference type="GO" id="GO:0005506">
    <property type="term" value="F:iron ion binding"/>
    <property type="evidence" value="ECO:0007669"/>
    <property type="project" value="UniProtKB-UniRule"/>
</dbReference>
<dbReference type="GO" id="GO:0009102">
    <property type="term" value="P:biotin biosynthetic process"/>
    <property type="evidence" value="ECO:0007669"/>
    <property type="project" value="UniProtKB-UniRule"/>
</dbReference>
<dbReference type="CDD" id="cd01335">
    <property type="entry name" value="Radical_SAM"/>
    <property type="match status" value="1"/>
</dbReference>
<dbReference type="FunFam" id="3.20.20.70:FF:000011">
    <property type="entry name" value="Biotin synthase"/>
    <property type="match status" value="1"/>
</dbReference>
<dbReference type="Gene3D" id="3.20.20.70">
    <property type="entry name" value="Aldolase class I"/>
    <property type="match status" value="1"/>
</dbReference>
<dbReference type="HAMAP" id="MF_01694">
    <property type="entry name" value="BioB"/>
    <property type="match status" value="1"/>
</dbReference>
<dbReference type="InterPro" id="IPR013785">
    <property type="entry name" value="Aldolase_TIM"/>
</dbReference>
<dbReference type="InterPro" id="IPR010722">
    <property type="entry name" value="BATS_dom"/>
</dbReference>
<dbReference type="InterPro" id="IPR002684">
    <property type="entry name" value="Biotin_synth/BioAB"/>
</dbReference>
<dbReference type="InterPro" id="IPR024177">
    <property type="entry name" value="Biotin_synthase"/>
</dbReference>
<dbReference type="InterPro" id="IPR006638">
    <property type="entry name" value="Elp3/MiaA/NifB-like_rSAM"/>
</dbReference>
<dbReference type="InterPro" id="IPR007197">
    <property type="entry name" value="rSAM"/>
</dbReference>
<dbReference type="NCBIfam" id="TIGR00433">
    <property type="entry name" value="bioB"/>
    <property type="match status" value="1"/>
</dbReference>
<dbReference type="PANTHER" id="PTHR22976">
    <property type="entry name" value="BIOTIN SYNTHASE"/>
    <property type="match status" value="1"/>
</dbReference>
<dbReference type="PANTHER" id="PTHR22976:SF2">
    <property type="entry name" value="BIOTIN SYNTHASE, MITOCHONDRIAL"/>
    <property type="match status" value="1"/>
</dbReference>
<dbReference type="Pfam" id="PF06968">
    <property type="entry name" value="BATS"/>
    <property type="match status" value="1"/>
</dbReference>
<dbReference type="Pfam" id="PF04055">
    <property type="entry name" value="Radical_SAM"/>
    <property type="match status" value="1"/>
</dbReference>
<dbReference type="PIRSF" id="PIRSF001619">
    <property type="entry name" value="Biotin_synth"/>
    <property type="match status" value="1"/>
</dbReference>
<dbReference type="SFLD" id="SFLDF00272">
    <property type="entry name" value="biotin_synthase"/>
    <property type="match status" value="1"/>
</dbReference>
<dbReference type="SFLD" id="SFLDS00029">
    <property type="entry name" value="Radical_SAM"/>
    <property type="match status" value="1"/>
</dbReference>
<dbReference type="SMART" id="SM00876">
    <property type="entry name" value="BATS"/>
    <property type="match status" value="1"/>
</dbReference>
<dbReference type="SMART" id="SM00729">
    <property type="entry name" value="Elp3"/>
    <property type="match status" value="1"/>
</dbReference>
<dbReference type="SUPFAM" id="SSF102114">
    <property type="entry name" value="Radical SAM enzymes"/>
    <property type="match status" value="1"/>
</dbReference>
<dbReference type="PROSITE" id="PS51918">
    <property type="entry name" value="RADICAL_SAM"/>
    <property type="match status" value="1"/>
</dbReference>
<organism>
    <name type="scientific">Aliivibrio salmonicida (strain LFI1238)</name>
    <name type="common">Vibrio salmonicida (strain LFI1238)</name>
    <dbReference type="NCBI Taxonomy" id="316275"/>
    <lineage>
        <taxon>Bacteria</taxon>
        <taxon>Pseudomonadati</taxon>
        <taxon>Pseudomonadota</taxon>
        <taxon>Gammaproteobacteria</taxon>
        <taxon>Vibrionales</taxon>
        <taxon>Vibrionaceae</taxon>
        <taxon>Aliivibrio</taxon>
    </lineage>
</organism>
<comment type="function">
    <text evidence="1">Catalyzes the conversion of dethiobiotin (DTB) to biotin by the insertion of a sulfur atom into dethiobiotin via a radical-based mechanism.</text>
</comment>
<comment type="catalytic activity">
    <reaction evidence="1">
        <text>(4R,5S)-dethiobiotin + (sulfur carrier)-SH + 2 reduced [2Fe-2S]-[ferredoxin] + 2 S-adenosyl-L-methionine = (sulfur carrier)-H + biotin + 2 5'-deoxyadenosine + 2 L-methionine + 2 oxidized [2Fe-2S]-[ferredoxin]</text>
        <dbReference type="Rhea" id="RHEA:22060"/>
        <dbReference type="Rhea" id="RHEA-COMP:10000"/>
        <dbReference type="Rhea" id="RHEA-COMP:10001"/>
        <dbReference type="Rhea" id="RHEA-COMP:14737"/>
        <dbReference type="Rhea" id="RHEA-COMP:14739"/>
        <dbReference type="ChEBI" id="CHEBI:17319"/>
        <dbReference type="ChEBI" id="CHEBI:29917"/>
        <dbReference type="ChEBI" id="CHEBI:33737"/>
        <dbReference type="ChEBI" id="CHEBI:33738"/>
        <dbReference type="ChEBI" id="CHEBI:57586"/>
        <dbReference type="ChEBI" id="CHEBI:57844"/>
        <dbReference type="ChEBI" id="CHEBI:59789"/>
        <dbReference type="ChEBI" id="CHEBI:64428"/>
        <dbReference type="ChEBI" id="CHEBI:149473"/>
        <dbReference type="EC" id="2.8.1.6"/>
    </reaction>
</comment>
<comment type="cofactor">
    <cofactor evidence="1">
        <name>[4Fe-4S] cluster</name>
        <dbReference type="ChEBI" id="CHEBI:49883"/>
    </cofactor>
    <text evidence="1">Binds 1 [4Fe-4S] cluster. The cluster is coordinated with 3 cysteines and an exchangeable S-adenosyl-L-methionine.</text>
</comment>
<comment type="cofactor">
    <cofactor evidence="1">
        <name>[2Fe-2S] cluster</name>
        <dbReference type="ChEBI" id="CHEBI:190135"/>
    </cofactor>
    <text evidence="1">Binds 1 [2Fe-2S] cluster. The cluster is coordinated with 3 cysteines and 1 arginine.</text>
</comment>
<comment type="pathway">
    <text evidence="1">Cofactor biosynthesis; biotin biosynthesis; biotin from 7,8-diaminononanoate: step 2/2.</text>
</comment>
<comment type="subunit">
    <text evidence="1">Homodimer.</text>
</comment>
<comment type="similarity">
    <text evidence="1">Belongs to the radical SAM superfamily. Biotin synthase family.</text>
</comment>
<feature type="chain" id="PRO_0000381192" description="Biotin synthase">
    <location>
        <begin position="1"/>
        <end position="350"/>
    </location>
</feature>
<feature type="domain" description="Radical SAM core" evidence="2">
    <location>
        <begin position="38"/>
        <end position="256"/>
    </location>
</feature>
<feature type="binding site" evidence="1">
    <location>
        <position position="53"/>
    </location>
    <ligand>
        <name>[4Fe-4S] cluster</name>
        <dbReference type="ChEBI" id="CHEBI:49883"/>
        <note>4Fe-4S-S-AdoMet</note>
    </ligand>
</feature>
<feature type="binding site" evidence="1">
    <location>
        <position position="57"/>
    </location>
    <ligand>
        <name>[4Fe-4S] cluster</name>
        <dbReference type="ChEBI" id="CHEBI:49883"/>
        <note>4Fe-4S-S-AdoMet</note>
    </ligand>
</feature>
<feature type="binding site" evidence="1">
    <location>
        <position position="60"/>
    </location>
    <ligand>
        <name>[4Fe-4S] cluster</name>
        <dbReference type="ChEBI" id="CHEBI:49883"/>
        <note>4Fe-4S-S-AdoMet</note>
    </ligand>
</feature>
<feature type="binding site" evidence="1">
    <location>
        <position position="97"/>
    </location>
    <ligand>
        <name>[2Fe-2S] cluster</name>
        <dbReference type="ChEBI" id="CHEBI:190135"/>
    </ligand>
</feature>
<feature type="binding site" evidence="1">
    <location>
        <position position="128"/>
    </location>
    <ligand>
        <name>[2Fe-2S] cluster</name>
        <dbReference type="ChEBI" id="CHEBI:190135"/>
    </ligand>
</feature>
<feature type="binding site" evidence="1">
    <location>
        <position position="188"/>
    </location>
    <ligand>
        <name>[2Fe-2S] cluster</name>
        <dbReference type="ChEBI" id="CHEBI:190135"/>
    </ligand>
</feature>
<feature type="binding site" evidence="1">
    <location>
        <position position="260"/>
    </location>
    <ligand>
        <name>[2Fe-2S] cluster</name>
        <dbReference type="ChEBI" id="CHEBI:190135"/>
    </ligand>
</feature>
<proteinExistence type="inferred from homology"/>